<proteinExistence type="inferred from homology"/>
<gene>
    <name evidence="1" type="primary">purA</name>
    <name type="ordered locus">VC0395_A2180</name>
    <name type="ordered locus">VC395_2715</name>
</gene>
<name>PURA_VIBC3</name>
<reference key="1">
    <citation type="submission" date="2007-03" db="EMBL/GenBank/DDBJ databases">
        <authorList>
            <person name="Heidelberg J."/>
        </authorList>
    </citation>
    <scope>NUCLEOTIDE SEQUENCE [LARGE SCALE GENOMIC DNA]</scope>
    <source>
        <strain>ATCC 39541 / Classical Ogawa 395 / O395</strain>
    </source>
</reference>
<reference key="2">
    <citation type="journal article" date="2008" name="PLoS ONE">
        <title>A recalibrated molecular clock and independent origins for the cholera pandemic clones.</title>
        <authorList>
            <person name="Feng L."/>
            <person name="Reeves P.R."/>
            <person name="Lan R."/>
            <person name="Ren Y."/>
            <person name="Gao C."/>
            <person name="Zhou Z."/>
            <person name="Ren Y."/>
            <person name="Cheng J."/>
            <person name="Wang W."/>
            <person name="Wang J."/>
            <person name="Qian W."/>
            <person name="Li D."/>
            <person name="Wang L."/>
        </authorList>
    </citation>
    <scope>NUCLEOTIDE SEQUENCE [LARGE SCALE GENOMIC DNA]</scope>
    <source>
        <strain>ATCC 39541 / Classical Ogawa 395 / O395</strain>
    </source>
</reference>
<evidence type="ECO:0000255" key="1">
    <source>
        <dbReference type="HAMAP-Rule" id="MF_00011"/>
    </source>
</evidence>
<sequence>MGNNVVVLGTQWGDEGKGKIVDLLTEDAKYVVRYQGGHNAGHTLVIDGQKTVLHLIPSGILRNNVKCIIGNGVVLSPEALIKEMSGLEERGVPVRERLFISEACPLILPYHVALDQAREAARGKKAIGTTGRGIGPAYEDKVARRGLRVGDLFDMASFAEKLQEVMAFHNFQLEHFYKVEPVSYEAVLEQAKGYAELLTSMVIDVTNELDAARKRGDKIMFEGAQGTLLDIDHGTYPYVTSSNTTAGGVAAGSGFGPRHLGYILGIAKAYCTRVGAGPFPTELFDEVGDHLGTKGHEFGATTGRKRRCGWFDAVAMRRAIQINSVTGFCLTKLDVLDGLKEIKICTGYQMPDGSIAEVSPMAADAFENVTPIFETMPGWSETTFGAKTLAELPQTALDYIKRIEELTGVPVDIISTGPDRNETIIKVHPFSA</sequence>
<organism>
    <name type="scientific">Vibrio cholerae serotype O1 (strain ATCC 39541 / Classical Ogawa 395 / O395)</name>
    <dbReference type="NCBI Taxonomy" id="345073"/>
    <lineage>
        <taxon>Bacteria</taxon>
        <taxon>Pseudomonadati</taxon>
        <taxon>Pseudomonadota</taxon>
        <taxon>Gammaproteobacteria</taxon>
        <taxon>Vibrionales</taxon>
        <taxon>Vibrionaceae</taxon>
        <taxon>Vibrio</taxon>
    </lineage>
</organism>
<protein>
    <recommendedName>
        <fullName evidence="1">Adenylosuccinate synthetase</fullName>
        <shortName evidence="1">AMPSase</shortName>
        <shortName evidence="1">AdSS</shortName>
        <ecNumber evidence="1">6.3.4.4</ecNumber>
    </recommendedName>
    <alternativeName>
        <fullName evidence="1">IMP--aspartate ligase</fullName>
    </alternativeName>
</protein>
<keyword id="KW-0963">Cytoplasm</keyword>
<keyword id="KW-0342">GTP-binding</keyword>
<keyword id="KW-0436">Ligase</keyword>
<keyword id="KW-0460">Magnesium</keyword>
<keyword id="KW-0479">Metal-binding</keyword>
<keyword id="KW-0547">Nucleotide-binding</keyword>
<keyword id="KW-0658">Purine biosynthesis</keyword>
<dbReference type="EC" id="6.3.4.4" evidence="1"/>
<dbReference type="EMBL" id="CP000627">
    <property type="protein sequence ID" value="ABQ20264.1"/>
    <property type="molecule type" value="Genomic_DNA"/>
</dbReference>
<dbReference type="EMBL" id="CP001235">
    <property type="protein sequence ID" value="ACP10701.1"/>
    <property type="molecule type" value="Genomic_DNA"/>
</dbReference>
<dbReference type="RefSeq" id="WP_000527934.1">
    <property type="nucleotide sequence ID" value="NZ_JAACZH010000007.1"/>
</dbReference>
<dbReference type="SMR" id="A5F534"/>
<dbReference type="KEGG" id="vco:VC0395_A2180"/>
<dbReference type="KEGG" id="vcr:VC395_2715"/>
<dbReference type="PATRIC" id="fig|345073.21.peg.2616"/>
<dbReference type="eggNOG" id="COG0104">
    <property type="taxonomic scope" value="Bacteria"/>
</dbReference>
<dbReference type="HOGENOM" id="CLU_029848_0_0_6"/>
<dbReference type="OrthoDB" id="9807553at2"/>
<dbReference type="UniPathway" id="UPA00075">
    <property type="reaction ID" value="UER00335"/>
</dbReference>
<dbReference type="Proteomes" id="UP000000249">
    <property type="component" value="Chromosome 2"/>
</dbReference>
<dbReference type="GO" id="GO:0005737">
    <property type="term" value="C:cytoplasm"/>
    <property type="evidence" value="ECO:0007669"/>
    <property type="project" value="UniProtKB-SubCell"/>
</dbReference>
<dbReference type="GO" id="GO:0004019">
    <property type="term" value="F:adenylosuccinate synthase activity"/>
    <property type="evidence" value="ECO:0007669"/>
    <property type="project" value="UniProtKB-UniRule"/>
</dbReference>
<dbReference type="GO" id="GO:0005525">
    <property type="term" value="F:GTP binding"/>
    <property type="evidence" value="ECO:0007669"/>
    <property type="project" value="UniProtKB-UniRule"/>
</dbReference>
<dbReference type="GO" id="GO:0000287">
    <property type="term" value="F:magnesium ion binding"/>
    <property type="evidence" value="ECO:0007669"/>
    <property type="project" value="UniProtKB-UniRule"/>
</dbReference>
<dbReference type="GO" id="GO:0044208">
    <property type="term" value="P:'de novo' AMP biosynthetic process"/>
    <property type="evidence" value="ECO:0007669"/>
    <property type="project" value="UniProtKB-UniRule"/>
</dbReference>
<dbReference type="GO" id="GO:0046040">
    <property type="term" value="P:IMP metabolic process"/>
    <property type="evidence" value="ECO:0007669"/>
    <property type="project" value="TreeGrafter"/>
</dbReference>
<dbReference type="CDD" id="cd03108">
    <property type="entry name" value="AdSS"/>
    <property type="match status" value="1"/>
</dbReference>
<dbReference type="FunFam" id="1.10.300.10:FF:000001">
    <property type="entry name" value="Adenylosuccinate synthetase"/>
    <property type="match status" value="1"/>
</dbReference>
<dbReference type="FunFam" id="3.90.170.10:FF:000001">
    <property type="entry name" value="Adenylosuccinate synthetase"/>
    <property type="match status" value="1"/>
</dbReference>
<dbReference type="Gene3D" id="3.40.440.10">
    <property type="entry name" value="Adenylosuccinate Synthetase, subunit A, domain 1"/>
    <property type="match status" value="1"/>
</dbReference>
<dbReference type="Gene3D" id="1.10.300.10">
    <property type="entry name" value="Adenylosuccinate Synthetase, subunit A, domain 2"/>
    <property type="match status" value="1"/>
</dbReference>
<dbReference type="Gene3D" id="3.90.170.10">
    <property type="entry name" value="Adenylosuccinate Synthetase, subunit A, domain 3"/>
    <property type="match status" value="1"/>
</dbReference>
<dbReference type="HAMAP" id="MF_00011">
    <property type="entry name" value="Adenylosucc_synth"/>
    <property type="match status" value="1"/>
</dbReference>
<dbReference type="InterPro" id="IPR018220">
    <property type="entry name" value="Adenylosuccin_syn_GTP-bd"/>
</dbReference>
<dbReference type="InterPro" id="IPR033128">
    <property type="entry name" value="Adenylosuccin_syn_Lys_AS"/>
</dbReference>
<dbReference type="InterPro" id="IPR042109">
    <property type="entry name" value="Adenylosuccinate_synth_dom1"/>
</dbReference>
<dbReference type="InterPro" id="IPR042110">
    <property type="entry name" value="Adenylosuccinate_synth_dom2"/>
</dbReference>
<dbReference type="InterPro" id="IPR042111">
    <property type="entry name" value="Adenylosuccinate_synth_dom3"/>
</dbReference>
<dbReference type="InterPro" id="IPR001114">
    <property type="entry name" value="Adenylosuccinate_synthetase"/>
</dbReference>
<dbReference type="InterPro" id="IPR027417">
    <property type="entry name" value="P-loop_NTPase"/>
</dbReference>
<dbReference type="NCBIfam" id="NF002223">
    <property type="entry name" value="PRK01117.1"/>
    <property type="match status" value="1"/>
</dbReference>
<dbReference type="NCBIfam" id="TIGR00184">
    <property type="entry name" value="purA"/>
    <property type="match status" value="1"/>
</dbReference>
<dbReference type="PANTHER" id="PTHR11846">
    <property type="entry name" value="ADENYLOSUCCINATE SYNTHETASE"/>
    <property type="match status" value="1"/>
</dbReference>
<dbReference type="PANTHER" id="PTHR11846:SF0">
    <property type="entry name" value="ADENYLOSUCCINATE SYNTHETASE"/>
    <property type="match status" value="1"/>
</dbReference>
<dbReference type="Pfam" id="PF00709">
    <property type="entry name" value="Adenylsucc_synt"/>
    <property type="match status" value="1"/>
</dbReference>
<dbReference type="SMART" id="SM00788">
    <property type="entry name" value="Adenylsucc_synt"/>
    <property type="match status" value="1"/>
</dbReference>
<dbReference type="SUPFAM" id="SSF52540">
    <property type="entry name" value="P-loop containing nucleoside triphosphate hydrolases"/>
    <property type="match status" value="1"/>
</dbReference>
<dbReference type="PROSITE" id="PS01266">
    <property type="entry name" value="ADENYLOSUCCIN_SYN_1"/>
    <property type="match status" value="1"/>
</dbReference>
<dbReference type="PROSITE" id="PS00513">
    <property type="entry name" value="ADENYLOSUCCIN_SYN_2"/>
    <property type="match status" value="1"/>
</dbReference>
<feature type="chain" id="PRO_1000070947" description="Adenylosuccinate synthetase">
    <location>
        <begin position="1"/>
        <end position="432"/>
    </location>
</feature>
<feature type="active site" description="Proton acceptor" evidence="1">
    <location>
        <position position="14"/>
    </location>
</feature>
<feature type="active site" description="Proton donor" evidence="1">
    <location>
        <position position="42"/>
    </location>
</feature>
<feature type="binding site" evidence="1">
    <location>
        <begin position="13"/>
        <end position="19"/>
    </location>
    <ligand>
        <name>GTP</name>
        <dbReference type="ChEBI" id="CHEBI:37565"/>
    </ligand>
</feature>
<feature type="binding site" description="in other chain" evidence="1">
    <location>
        <begin position="14"/>
        <end position="17"/>
    </location>
    <ligand>
        <name>IMP</name>
        <dbReference type="ChEBI" id="CHEBI:58053"/>
        <note>ligand shared between dimeric partners</note>
    </ligand>
</feature>
<feature type="binding site" evidence="1">
    <location>
        <position position="14"/>
    </location>
    <ligand>
        <name>Mg(2+)</name>
        <dbReference type="ChEBI" id="CHEBI:18420"/>
    </ligand>
</feature>
<feature type="binding site" description="in other chain" evidence="1">
    <location>
        <begin position="39"/>
        <end position="42"/>
    </location>
    <ligand>
        <name>IMP</name>
        <dbReference type="ChEBI" id="CHEBI:58053"/>
        <note>ligand shared between dimeric partners</note>
    </ligand>
</feature>
<feature type="binding site" evidence="1">
    <location>
        <begin position="41"/>
        <end position="43"/>
    </location>
    <ligand>
        <name>GTP</name>
        <dbReference type="ChEBI" id="CHEBI:37565"/>
    </ligand>
</feature>
<feature type="binding site" evidence="1">
    <location>
        <position position="41"/>
    </location>
    <ligand>
        <name>Mg(2+)</name>
        <dbReference type="ChEBI" id="CHEBI:18420"/>
    </ligand>
</feature>
<feature type="binding site" description="in other chain" evidence="1">
    <location>
        <position position="130"/>
    </location>
    <ligand>
        <name>IMP</name>
        <dbReference type="ChEBI" id="CHEBI:58053"/>
        <note>ligand shared between dimeric partners</note>
    </ligand>
</feature>
<feature type="binding site" evidence="1">
    <location>
        <position position="144"/>
    </location>
    <ligand>
        <name>IMP</name>
        <dbReference type="ChEBI" id="CHEBI:58053"/>
        <note>ligand shared between dimeric partners</note>
    </ligand>
</feature>
<feature type="binding site" description="in other chain" evidence="1">
    <location>
        <position position="225"/>
    </location>
    <ligand>
        <name>IMP</name>
        <dbReference type="ChEBI" id="CHEBI:58053"/>
        <note>ligand shared between dimeric partners</note>
    </ligand>
</feature>
<feature type="binding site" description="in other chain" evidence="1">
    <location>
        <position position="240"/>
    </location>
    <ligand>
        <name>IMP</name>
        <dbReference type="ChEBI" id="CHEBI:58053"/>
        <note>ligand shared between dimeric partners</note>
    </ligand>
</feature>
<feature type="binding site" evidence="1">
    <location>
        <begin position="300"/>
        <end position="306"/>
    </location>
    <ligand>
        <name>substrate</name>
    </ligand>
</feature>
<feature type="binding site" description="in other chain" evidence="1">
    <location>
        <position position="304"/>
    </location>
    <ligand>
        <name>IMP</name>
        <dbReference type="ChEBI" id="CHEBI:58053"/>
        <note>ligand shared between dimeric partners</note>
    </ligand>
</feature>
<feature type="binding site" evidence="1">
    <location>
        <position position="306"/>
    </location>
    <ligand>
        <name>GTP</name>
        <dbReference type="ChEBI" id="CHEBI:37565"/>
    </ligand>
</feature>
<feature type="binding site" evidence="1">
    <location>
        <begin position="332"/>
        <end position="334"/>
    </location>
    <ligand>
        <name>GTP</name>
        <dbReference type="ChEBI" id="CHEBI:37565"/>
    </ligand>
</feature>
<feature type="binding site" evidence="1">
    <location>
        <begin position="415"/>
        <end position="417"/>
    </location>
    <ligand>
        <name>GTP</name>
        <dbReference type="ChEBI" id="CHEBI:37565"/>
    </ligand>
</feature>
<accession>A5F534</accession>
<accession>C3LXK1</accession>
<comment type="function">
    <text evidence="1">Plays an important role in the de novo pathway of purine nucleotide biosynthesis. Catalyzes the first committed step in the biosynthesis of AMP from IMP.</text>
</comment>
<comment type="catalytic activity">
    <reaction evidence="1">
        <text>IMP + L-aspartate + GTP = N(6)-(1,2-dicarboxyethyl)-AMP + GDP + phosphate + 2 H(+)</text>
        <dbReference type="Rhea" id="RHEA:15753"/>
        <dbReference type="ChEBI" id="CHEBI:15378"/>
        <dbReference type="ChEBI" id="CHEBI:29991"/>
        <dbReference type="ChEBI" id="CHEBI:37565"/>
        <dbReference type="ChEBI" id="CHEBI:43474"/>
        <dbReference type="ChEBI" id="CHEBI:57567"/>
        <dbReference type="ChEBI" id="CHEBI:58053"/>
        <dbReference type="ChEBI" id="CHEBI:58189"/>
        <dbReference type="EC" id="6.3.4.4"/>
    </reaction>
</comment>
<comment type="cofactor">
    <cofactor evidence="1">
        <name>Mg(2+)</name>
        <dbReference type="ChEBI" id="CHEBI:18420"/>
    </cofactor>
    <text evidence="1">Binds 1 Mg(2+) ion per subunit.</text>
</comment>
<comment type="pathway">
    <text evidence="1">Purine metabolism; AMP biosynthesis via de novo pathway; AMP from IMP: step 1/2.</text>
</comment>
<comment type="subunit">
    <text evidence="1">Homodimer.</text>
</comment>
<comment type="subcellular location">
    <subcellularLocation>
        <location evidence="1">Cytoplasm</location>
    </subcellularLocation>
</comment>
<comment type="similarity">
    <text evidence="1">Belongs to the adenylosuccinate synthetase family.</text>
</comment>